<gene>
    <name evidence="1" type="primary">rpmH</name>
    <name type="ordered locus">Nther_2935</name>
</gene>
<organism>
    <name type="scientific">Natranaerobius thermophilus (strain ATCC BAA-1301 / DSM 18059 / JW/NM-WN-LF)</name>
    <dbReference type="NCBI Taxonomy" id="457570"/>
    <lineage>
        <taxon>Bacteria</taxon>
        <taxon>Bacillati</taxon>
        <taxon>Bacillota</taxon>
        <taxon>Clostridia</taxon>
        <taxon>Natranaerobiales</taxon>
        <taxon>Natranaerobiaceae</taxon>
        <taxon>Natranaerobius</taxon>
    </lineage>
</organism>
<name>RL34_NATTJ</name>
<dbReference type="EMBL" id="CP001034">
    <property type="protein sequence ID" value="ACB86481.1"/>
    <property type="molecule type" value="Genomic_DNA"/>
</dbReference>
<dbReference type="RefSeq" id="WP_012449313.1">
    <property type="nucleotide sequence ID" value="NC_010718.1"/>
</dbReference>
<dbReference type="SMR" id="B2A475"/>
<dbReference type="FunCoup" id="B2A475">
    <property type="interactions" value="243"/>
</dbReference>
<dbReference type="STRING" id="457570.Nther_2935"/>
<dbReference type="KEGG" id="nth:Nther_2935"/>
<dbReference type="eggNOG" id="COG0230">
    <property type="taxonomic scope" value="Bacteria"/>
</dbReference>
<dbReference type="HOGENOM" id="CLU_129938_2_0_9"/>
<dbReference type="InParanoid" id="B2A475"/>
<dbReference type="Proteomes" id="UP000001683">
    <property type="component" value="Chromosome"/>
</dbReference>
<dbReference type="GO" id="GO:1990904">
    <property type="term" value="C:ribonucleoprotein complex"/>
    <property type="evidence" value="ECO:0007669"/>
    <property type="project" value="UniProtKB-KW"/>
</dbReference>
<dbReference type="GO" id="GO:0005840">
    <property type="term" value="C:ribosome"/>
    <property type="evidence" value="ECO:0007669"/>
    <property type="project" value="UniProtKB-KW"/>
</dbReference>
<dbReference type="GO" id="GO:0003735">
    <property type="term" value="F:structural constituent of ribosome"/>
    <property type="evidence" value="ECO:0007669"/>
    <property type="project" value="InterPro"/>
</dbReference>
<dbReference type="GO" id="GO:0006412">
    <property type="term" value="P:translation"/>
    <property type="evidence" value="ECO:0007669"/>
    <property type="project" value="UniProtKB-UniRule"/>
</dbReference>
<dbReference type="FunFam" id="1.10.287.3980:FF:000001">
    <property type="entry name" value="Mitochondrial ribosomal protein L34"/>
    <property type="match status" value="1"/>
</dbReference>
<dbReference type="Gene3D" id="1.10.287.3980">
    <property type="match status" value="1"/>
</dbReference>
<dbReference type="HAMAP" id="MF_00391">
    <property type="entry name" value="Ribosomal_bL34"/>
    <property type="match status" value="1"/>
</dbReference>
<dbReference type="InterPro" id="IPR000271">
    <property type="entry name" value="Ribosomal_bL34"/>
</dbReference>
<dbReference type="InterPro" id="IPR020939">
    <property type="entry name" value="Ribosomal_bL34_CS"/>
</dbReference>
<dbReference type="NCBIfam" id="TIGR01030">
    <property type="entry name" value="rpmH_bact"/>
    <property type="match status" value="1"/>
</dbReference>
<dbReference type="PANTHER" id="PTHR14503:SF4">
    <property type="entry name" value="LARGE RIBOSOMAL SUBUNIT PROTEIN BL34M"/>
    <property type="match status" value="1"/>
</dbReference>
<dbReference type="PANTHER" id="PTHR14503">
    <property type="entry name" value="MITOCHONDRIAL RIBOSOMAL PROTEIN 34 FAMILY MEMBER"/>
    <property type="match status" value="1"/>
</dbReference>
<dbReference type="Pfam" id="PF00468">
    <property type="entry name" value="Ribosomal_L34"/>
    <property type="match status" value="1"/>
</dbReference>
<dbReference type="PROSITE" id="PS00784">
    <property type="entry name" value="RIBOSOMAL_L34"/>
    <property type="match status" value="1"/>
</dbReference>
<sequence length="44" mass="5482">MKRTYQPKKRQRKKEHGFRKRMKTKAGRNILRNRRRKGRKTLSA</sequence>
<feature type="chain" id="PRO_1000196075" description="Large ribosomal subunit protein bL34">
    <location>
        <begin position="1"/>
        <end position="44"/>
    </location>
</feature>
<feature type="region of interest" description="Disordered" evidence="2">
    <location>
        <begin position="1"/>
        <end position="44"/>
    </location>
</feature>
<keyword id="KW-1185">Reference proteome</keyword>
<keyword id="KW-0687">Ribonucleoprotein</keyword>
<keyword id="KW-0689">Ribosomal protein</keyword>
<proteinExistence type="inferred from homology"/>
<reference key="1">
    <citation type="submission" date="2008-04" db="EMBL/GenBank/DDBJ databases">
        <title>Complete sequence of chromosome of Natranaerobius thermophilus JW/NM-WN-LF.</title>
        <authorList>
            <consortium name="US DOE Joint Genome Institute"/>
            <person name="Copeland A."/>
            <person name="Lucas S."/>
            <person name="Lapidus A."/>
            <person name="Glavina del Rio T."/>
            <person name="Dalin E."/>
            <person name="Tice H."/>
            <person name="Bruce D."/>
            <person name="Goodwin L."/>
            <person name="Pitluck S."/>
            <person name="Chertkov O."/>
            <person name="Brettin T."/>
            <person name="Detter J.C."/>
            <person name="Han C."/>
            <person name="Kuske C.R."/>
            <person name="Schmutz J."/>
            <person name="Larimer F."/>
            <person name="Land M."/>
            <person name="Hauser L."/>
            <person name="Kyrpides N."/>
            <person name="Lykidis A."/>
            <person name="Mesbah N.M."/>
            <person name="Wiegel J."/>
        </authorList>
    </citation>
    <scope>NUCLEOTIDE SEQUENCE [LARGE SCALE GENOMIC DNA]</scope>
    <source>
        <strain>ATCC BAA-1301 / DSM 18059 / JW/NM-WN-LF</strain>
    </source>
</reference>
<protein>
    <recommendedName>
        <fullName evidence="1">Large ribosomal subunit protein bL34</fullName>
    </recommendedName>
    <alternativeName>
        <fullName evidence="3">50S ribosomal protein L34</fullName>
    </alternativeName>
</protein>
<comment type="similarity">
    <text evidence="1">Belongs to the bacterial ribosomal protein bL34 family.</text>
</comment>
<accession>B2A475</accession>
<evidence type="ECO:0000255" key="1">
    <source>
        <dbReference type="HAMAP-Rule" id="MF_00391"/>
    </source>
</evidence>
<evidence type="ECO:0000256" key="2">
    <source>
        <dbReference type="SAM" id="MobiDB-lite"/>
    </source>
</evidence>
<evidence type="ECO:0000305" key="3"/>